<reference key="1">
    <citation type="submission" date="2009-05" db="EMBL/GenBank/DDBJ databases">
        <title>Complete sequence of Tolumonas auensis DSM 9187.</title>
        <authorList>
            <consortium name="US DOE Joint Genome Institute"/>
            <person name="Lucas S."/>
            <person name="Copeland A."/>
            <person name="Lapidus A."/>
            <person name="Glavina del Rio T."/>
            <person name="Tice H."/>
            <person name="Bruce D."/>
            <person name="Goodwin L."/>
            <person name="Pitluck S."/>
            <person name="Chertkov O."/>
            <person name="Brettin T."/>
            <person name="Detter J.C."/>
            <person name="Han C."/>
            <person name="Larimer F."/>
            <person name="Land M."/>
            <person name="Hauser L."/>
            <person name="Kyrpides N."/>
            <person name="Mikhailova N."/>
            <person name="Spring S."/>
            <person name="Beller H."/>
        </authorList>
    </citation>
    <scope>NUCLEOTIDE SEQUENCE [LARGE SCALE GENOMIC DNA]</scope>
    <source>
        <strain>DSM 9187 / NBRC 110442 / TA 4</strain>
    </source>
</reference>
<name>Y1474_TOLAT</name>
<feature type="chain" id="PRO_1000203297" description="UPF0114 protein Tola_1474">
    <location>
        <begin position="1"/>
        <end position="167"/>
    </location>
</feature>
<feature type="transmembrane region" description="Helical" evidence="1">
    <location>
        <begin position="15"/>
        <end position="35"/>
    </location>
</feature>
<feature type="transmembrane region" description="Helical" evidence="1">
    <location>
        <begin position="53"/>
        <end position="73"/>
    </location>
</feature>
<feature type="transmembrane region" description="Helical" evidence="1">
    <location>
        <begin position="109"/>
        <end position="129"/>
    </location>
</feature>
<feature type="transmembrane region" description="Helical" evidence="1">
    <location>
        <begin position="136"/>
        <end position="156"/>
    </location>
</feature>
<sequence>MERFIERLMYSARWIMAPIYLGLSLALLALGIKFFQEVFHIFTVIISMKEVELILIILSLIDISLVGGLIVMVMYSGYENFVSRLDLDDHDDKLSWLGKLDAGSLKNKVAASIVAISSIHLLKVFMNTENIADDKIKWYLLIHITFVMSAFAMGYLDKLLRDKDSPH</sequence>
<comment type="subcellular location">
    <subcellularLocation>
        <location evidence="1">Cell membrane</location>
        <topology evidence="1">Multi-pass membrane protein</topology>
    </subcellularLocation>
</comment>
<comment type="similarity">
    <text evidence="1">Belongs to the UPF0114 family.</text>
</comment>
<evidence type="ECO:0000255" key="1">
    <source>
        <dbReference type="HAMAP-Rule" id="MF_00143"/>
    </source>
</evidence>
<keyword id="KW-1003">Cell membrane</keyword>
<keyword id="KW-0472">Membrane</keyword>
<keyword id="KW-1185">Reference proteome</keyword>
<keyword id="KW-0812">Transmembrane</keyword>
<keyword id="KW-1133">Transmembrane helix</keyword>
<dbReference type="EMBL" id="CP001616">
    <property type="protein sequence ID" value="ACQ93088.1"/>
    <property type="molecule type" value="Genomic_DNA"/>
</dbReference>
<dbReference type="RefSeq" id="WP_015878560.1">
    <property type="nucleotide sequence ID" value="NC_012691.1"/>
</dbReference>
<dbReference type="KEGG" id="tau:Tola_1474"/>
<dbReference type="eggNOG" id="COG2862">
    <property type="taxonomic scope" value="Bacteria"/>
</dbReference>
<dbReference type="HOGENOM" id="CLU_097887_1_0_6"/>
<dbReference type="OrthoDB" id="9783569at2"/>
<dbReference type="Proteomes" id="UP000009073">
    <property type="component" value="Chromosome"/>
</dbReference>
<dbReference type="GO" id="GO:0005886">
    <property type="term" value="C:plasma membrane"/>
    <property type="evidence" value="ECO:0007669"/>
    <property type="project" value="UniProtKB-SubCell"/>
</dbReference>
<dbReference type="HAMAP" id="MF_00143">
    <property type="entry name" value="UPF0114"/>
    <property type="match status" value="1"/>
</dbReference>
<dbReference type="InterPro" id="IPR005134">
    <property type="entry name" value="UPF0114"/>
</dbReference>
<dbReference type="InterPro" id="IPR020761">
    <property type="entry name" value="UPF0114_bac"/>
</dbReference>
<dbReference type="NCBIfam" id="TIGR00645">
    <property type="entry name" value="HI0507"/>
    <property type="match status" value="1"/>
</dbReference>
<dbReference type="PANTHER" id="PTHR38596">
    <property type="entry name" value="UPF0114 PROTEIN YQHA"/>
    <property type="match status" value="1"/>
</dbReference>
<dbReference type="PANTHER" id="PTHR38596:SF1">
    <property type="entry name" value="UPF0114 PROTEIN YQHA"/>
    <property type="match status" value="1"/>
</dbReference>
<dbReference type="Pfam" id="PF03350">
    <property type="entry name" value="UPF0114"/>
    <property type="match status" value="1"/>
</dbReference>
<gene>
    <name type="ordered locus">Tola_1474</name>
</gene>
<proteinExistence type="inferred from homology"/>
<protein>
    <recommendedName>
        <fullName evidence="1">UPF0114 protein Tola_1474</fullName>
    </recommendedName>
</protein>
<organism>
    <name type="scientific">Tolumonas auensis (strain DSM 9187 / NBRC 110442 / TA 4)</name>
    <dbReference type="NCBI Taxonomy" id="595494"/>
    <lineage>
        <taxon>Bacteria</taxon>
        <taxon>Pseudomonadati</taxon>
        <taxon>Pseudomonadota</taxon>
        <taxon>Gammaproteobacteria</taxon>
        <taxon>Aeromonadales</taxon>
        <taxon>Aeromonadaceae</taxon>
        <taxon>Tolumonas</taxon>
    </lineage>
</organism>
<accession>C4LES1</accession>